<comment type="function">
    <text evidence="2 5">Specifically dimethylates a single guanine residue at position 27 of tRNA(Tyr) using S-adenosyl-L-methionine as donor of the methyl groups (By similarity). Dimethylation at position 27 of tRNA(Tyr) is required for efficient translation of tyrosine codons (By similarity). Also required to maintain 3-(3-amino-3-carboxypropyl)uridine (acp3U) in the D-loop of several cytoplasmic tRNAs (By similarity). May play a role in motor coordination and exploratory behavior (PubMed:17198746).</text>
</comment>
<comment type="catalytic activity">
    <reaction evidence="2">
        <text>guanosine(27) in tRNA(Tyr) + 2 S-adenosyl-L-methionine = N(2)-dimethylguanosine(27) in tRNA(Tyr) + 2 S-adenosyl-L-homocysteine + 2 H(+)</text>
        <dbReference type="Rhea" id="RHEA:83895"/>
        <dbReference type="Rhea" id="RHEA-COMP:20240"/>
        <dbReference type="Rhea" id="RHEA-COMP:20241"/>
        <dbReference type="ChEBI" id="CHEBI:15378"/>
        <dbReference type="ChEBI" id="CHEBI:57856"/>
        <dbReference type="ChEBI" id="CHEBI:59789"/>
        <dbReference type="ChEBI" id="CHEBI:74269"/>
        <dbReference type="ChEBI" id="CHEBI:74513"/>
    </reaction>
    <physiologicalReaction direction="left-to-right" evidence="2">
        <dbReference type="Rhea" id="RHEA:83896"/>
    </physiologicalReaction>
</comment>
<comment type="subcellular location">
    <subcellularLocation>
        <location evidence="2">Nucleus</location>
        <location evidence="2">Nucleolus</location>
    </subcellularLocation>
</comment>
<comment type="alternative products">
    <event type="alternative splicing"/>
    <isoform>
        <id>A2RSY6-1</id>
        <name>1</name>
        <sequence type="displayed"/>
    </isoform>
    <isoform>
        <id>A2RSY6-2</id>
        <name>2</name>
        <sequence type="described" ref="VSP_031047"/>
    </isoform>
    <isoform>
        <id>A2RSY6-3</id>
        <name>3</name>
        <sequence type="described" ref="VSP_031045 VSP_031046"/>
    </isoform>
    <isoform>
        <id>A2RSY6-4</id>
        <name>4</name>
        <sequence type="described" ref="VSP_031044"/>
    </isoform>
</comment>
<comment type="tissue specificity">
    <text evidence="5">Expressed in various neuronal structures during embryonic development, including spinal ganglia, trigeminal nerve and ganglion, olfactory and nasopharyngeal epithelium, nuclei of the metencephalon, thalamus and medulla oblongata. Also expressed in lung, esophagus, epiglottis, ependyma, vertebral column, spinal cord and brown adipose tissue. Expression persists in the adult brain with dynamically changing patterns in cortex and cerebellum.</text>
</comment>
<comment type="disruption phenotype">
    <text evidence="5">Mice are viable and show no apparent anatomical defects. However, they display significantly altered motor coordination and aberrant exploratory behavior.</text>
</comment>
<comment type="similarity">
    <text evidence="3">Belongs to the class I-like SAM-binding methyltransferase superfamily. Trm1 family.</text>
</comment>
<comment type="sequence caution" evidence="9">
    <conflict type="erroneous initiation">
        <sequence resource="EMBL-CDS" id="AAH37478"/>
    </conflict>
    <text>Extended N-terminus.</text>
</comment>
<reference key="1">
    <citation type="journal article" date="2005" name="Science">
        <title>The transcriptional landscape of the mammalian genome.</title>
        <authorList>
            <person name="Carninci P."/>
            <person name="Kasukawa T."/>
            <person name="Katayama S."/>
            <person name="Gough J."/>
            <person name="Frith M.C."/>
            <person name="Maeda N."/>
            <person name="Oyama R."/>
            <person name="Ravasi T."/>
            <person name="Lenhard B."/>
            <person name="Wells C."/>
            <person name="Kodzius R."/>
            <person name="Shimokawa K."/>
            <person name="Bajic V.B."/>
            <person name="Brenner S.E."/>
            <person name="Batalov S."/>
            <person name="Forrest A.R."/>
            <person name="Zavolan M."/>
            <person name="Davis M.J."/>
            <person name="Wilming L.G."/>
            <person name="Aidinis V."/>
            <person name="Allen J.E."/>
            <person name="Ambesi-Impiombato A."/>
            <person name="Apweiler R."/>
            <person name="Aturaliya R.N."/>
            <person name="Bailey T.L."/>
            <person name="Bansal M."/>
            <person name="Baxter L."/>
            <person name="Beisel K.W."/>
            <person name="Bersano T."/>
            <person name="Bono H."/>
            <person name="Chalk A.M."/>
            <person name="Chiu K.P."/>
            <person name="Choudhary V."/>
            <person name="Christoffels A."/>
            <person name="Clutterbuck D.R."/>
            <person name="Crowe M.L."/>
            <person name="Dalla E."/>
            <person name="Dalrymple B.P."/>
            <person name="de Bono B."/>
            <person name="Della Gatta G."/>
            <person name="di Bernardo D."/>
            <person name="Down T."/>
            <person name="Engstrom P."/>
            <person name="Fagiolini M."/>
            <person name="Faulkner G."/>
            <person name="Fletcher C.F."/>
            <person name="Fukushima T."/>
            <person name="Furuno M."/>
            <person name="Futaki S."/>
            <person name="Gariboldi M."/>
            <person name="Georgii-Hemming P."/>
            <person name="Gingeras T.R."/>
            <person name="Gojobori T."/>
            <person name="Green R.E."/>
            <person name="Gustincich S."/>
            <person name="Harbers M."/>
            <person name="Hayashi Y."/>
            <person name="Hensch T.K."/>
            <person name="Hirokawa N."/>
            <person name="Hill D."/>
            <person name="Huminiecki L."/>
            <person name="Iacono M."/>
            <person name="Ikeo K."/>
            <person name="Iwama A."/>
            <person name="Ishikawa T."/>
            <person name="Jakt M."/>
            <person name="Kanapin A."/>
            <person name="Katoh M."/>
            <person name="Kawasawa Y."/>
            <person name="Kelso J."/>
            <person name="Kitamura H."/>
            <person name="Kitano H."/>
            <person name="Kollias G."/>
            <person name="Krishnan S.P."/>
            <person name="Kruger A."/>
            <person name="Kummerfeld S.K."/>
            <person name="Kurochkin I.V."/>
            <person name="Lareau L.F."/>
            <person name="Lazarevic D."/>
            <person name="Lipovich L."/>
            <person name="Liu J."/>
            <person name="Liuni S."/>
            <person name="McWilliam S."/>
            <person name="Madan Babu M."/>
            <person name="Madera M."/>
            <person name="Marchionni L."/>
            <person name="Matsuda H."/>
            <person name="Matsuzawa S."/>
            <person name="Miki H."/>
            <person name="Mignone F."/>
            <person name="Miyake S."/>
            <person name="Morris K."/>
            <person name="Mottagui-Tabar S."/>
            <person name="Mulder N."/>
            <person name="Nakano N."/>
            <person name="Nakauchi H."/>
            <person name="Ng P."/>
            <person name="Nilsson R."/>
            <person name="Nishiguchi S."/>
            <person name="Nishikawa S."/>
            <person name="Nori F."/>
            <person name="Ohara O."/>
            <person name="Okazaki Y."/>
            <person name="Orlando V."/>
            <person name="Pang K.C."/>
            <person name="Pavan W.J."/>
            <person name="Pavesi G."/>
            <person name="Pesole G."/>
            <person name="Petrovsky N."/>
            <person name="Piazza S."/>
            <person name="Reed J."/>
            <person name="Reid J.F."/>
            <person name="Ring B.Z."/>
            <person name="Ringwald M."/>
            <person name="Rost B."/>
            <person name="Ruan Y."/>
            <person name="Salzberg S.L."/>
            <person name="Sandelin A."/>
            <person name="Schneider C."/>
            <person name="Schoenbach C."/>
            <person name="Sekiguchi K."/>
            <person name="Semple C.A."/>
            <person name="Seno S."/>
            <person name="Sessa L."/>
            <person name="Sheng Y."/>
            <person name="Shibata Y."/>
            <person name="Shimada H."/>
            <person name="Shimada K."/>
            <person name="Silva D."/>
            <person name="Sinclair B."/>
            <person name="Sperling S."/>
            <person name="Stupka E."/>
            <person name="Sugiura K."/>
            <person name="Sultana R."/>
            <person name="Takenaka Y."/>
            <person name="Taki K."/>
            <person name="Tammoja K."/>
            <person name="Tan S.L."/>
            <person name="Tang S."/>
            <person name="Taylor M.S."/>
            <person name="Tegner J."/>
            <person name="Teichmann S.A."/>
            <person name="Ueda H.R."/>
            <person name="van Nimwegen E."/>
            <person name="Verardo R."/>
            <person name="Wei C.L."/>
            <person name="Yagi K."/>
            <person name="Yamanishi H."/>
            <person name="Zabarovsky E."/>
            <person name="Zhu S."/>
            <person name="Zimmer A."/>
            <person name="Hide W."/>
            <person name="Bult C."/>
            <person name="Grimmond S.M."/>
            <person name="Teasdale R.D."/>
            <person name="Liu E.T."/>
            <person name="Brusic V."/>
            <person name="Quackenbush J."/>
            <person name="Wahlestedt C."/>
            <person name="Mattick J.S."/>
            <person name="Hume D.A."/>
            <person name="Kai C."/>
            <person name="Sasaki D."/>
            <person name="Tomaru Y."/>
            <person name="Fukuda S."/>
            <person name="Kanamori-Katayama M."/>
            <person name="Suzuki M."/>
            <person name="Aoki J."/>
            <person name="Arakawa T."/>
            <person name="Iida J."/>
            <person name="Imamura K."/>
            <person name="Itoh M."/>
            <person name="Kato T."/>
            <person name="Kawaji H."/>
            <person name="Kawagashira N."/>
            <person name="Kawashima T."/>
            <person name="Kojima M."/>
            <person name="Kondo S."/>
            <person name="Konno H."/>
            <person name="Nakano K."/>
            <person name="Ninomiya N."/>
            <person name="Nishio T."/>
            <person name="Okada M."/>
            <person name="Plessy C."/>
            <person name="Shibata K."/>
            <person name="Shiraki T."/>
            <person name="Suzuki S."/>
            <person name="Tagami M."/>
            <person name="Waki K."/>
            <person name="Watahiki A."/>
            <person name="Okamura-Oho Y."/>
            <person name="Suzuki H."/>
            <person name="Kawai J."/>
            <person name="Hayashizaki Y."/>
        </authorList>
    </citation>
    <scope>NUCLEOTIDE SEQUENCE [LARGE SCALE MRNA] (ISOFORMS 1; 3 AND 4)</scope>
    <source>
        <strain>C57BL/6J</strain>
        <strain>NOD</strain>
        <tissue>Pancreas</tissue>
        <tissue>Placenta</tissue>
        <tissue>Thymus</tissue>
    </source>
</reference>
<reference key="2">
    <citation type="journal article" date="2004" name="Genome Res.">
        <title>The status, quality, and expansion of the NIH full-length cDNA project: the Mammalian Gene Collection (MGC).</title>
        <authorList>
            <consortium name="The MGC Project Team"/>
        </authorList>
    </citation>
    <scope>NUCLEOTIDE SEQUENCE [LARGE SCALE MRNA] (ISOFORM 1)</scope>
    <scope>NUCLEOTIDE SEQUENCE [LARGE SCALE MRNA] OF 202-728 (ISOFORM 2)</scope>
    <source>
        <strain>FVB/N</strain>
        <tissue>Brain</tissue>
        <tissue>Eye</tissue>
        <tissue>Kidney</tissue>
        <tissue>Mammary tumor</tissue>
    </source>
</reference>
<reference key="3">
    <citation type="journal article" date="2007" name="Gene">
        <title>The mouse Trm1-like gene is expressed in neural tissues and plays a role in motor coordination and exploratory behaviour.</title>
        <authorList>
            <person name="Vauti F."/>
            <person name="Goller T."/>
            <person name="Beine R."/>
            <person name="Becker L."/>
            <person name="Klopstock T."/>
            <person name="Hoelter S.M."/>
            <person name="Wurst W."/>
            <person name="Fuchs H."/>
            <person name="Gailus-Durner V."/>
            <person name="de Angelis M.H."/>
            <person name="Arnold H.-H."/>
        </authorList>
    </citation>
    <scope>FUNCTION</scope>
    <scope>TISSUE SPECIFICITY</scope>
    <scope>DISRUPTION PHENOTYPE</scope>
</reference>
<reference key="4">
    <citation type="journal article" date="2010" name="Cell">
        <title>A tissue-specific atlas of mouse protein phosphorylation and expression.</title>
        <authorList>
            <person name="Huttlin E.L."/>
            <person name="Jedrychowski M.P."/>
            <person name="Elias J.E."/>
            <person name="Goswami T."/>
            <person name="Rad R."/>
            <person name="Beausoleil S.A."/>
            <person name="Villen J."/>
            <person name="Haas W."/>
            <person name="Sowa M.E."/>
            <person name="Gygi S.P."/>
        </authorList>
    </citation>
    <scope>IDENTIFICATION BY MASS SPECTROMETRY [LARGE SCALE ANALYSIS]</scope>
    <source>
        <tissue>Liver</tissue>
        <tissue>Spleen</tissue>
        <tissue>Testis</tissue>
    </source>
</reference>
<sequence length="728" mass="80861">MENMAEEELLPQEKEEAQVRVPTPAPDSAPVPAPAADTALDSAPTPDSDPAPALAPAPAPALSPSLASVPEEAESKRHISIQRRLADLEKLAFGTEGDVDSASSLNSDNPGTENSQTCPLCPKEKFRAYSSHKLRRHLQNLHWKISVEFEGYRMCICHLACRPVKPTIVGEQISSKLGAHYHCIICSATITRRTDMLGHVKRHVNKGETKSRYIAASTAKSSNEILKETDTDIQVFPNYSIPQKTDSYFNPKMKLNRQIIFCTLAALAKERKPLECLDAFGATGIMGLQWAKHLGNAVKVTINDLNENSVTLIQKNCHLNKLKVVVDSEEKEEGDALEDDGTLGDIQVTRMDANVLMHLRSFDFIHLDPFGTSVNYLDSAFRNVRNLGIVSVTSTDISSLYAKAQHVARRHYGCNIVRTEYYKELAARIVVAAVARAAARCNKGIEVLFAVALEHFVLVVVRVLRGPTSADETAKKIQYLIHCQWCEERIFQKDGNMVEENPYRQLPCNCHGSMPGKTAIELGPLWSSSLFNTGFLKRMLFESIHHGLDDIQPLIKTLIFESECTPQSQCSTHAPSNTNKQEENGVFVKTTDDTTIDIYSAQGKRKSNEMAINLAKKQKTDASTAHPPFYYNIHRHSIKGMNMPKLKKFLCCLSQAGFRVSRTHFDPMGIRTDAPLMQFKSILLKYSTPTYTGAQSEGQMPPAAEDTVTDRVEMSVSDKAEASGCRRW</sequence>
<proteinExistence type="evidence at protein level"/>
<name>TRM1L_MOUSE</name>
<keyword id="KW-0025">Alternative splicing</keyword>
<keyword id="KW-1017">Isopeptide bond</keyword>
<keyword id="KW-0479">Metal-binding</keyword>
<keyword id="KW-0489">Methyltransferase</keyword>
<keyword id="KW-0539">Nucleus</keyword>
<keyword id="KW-0597">Phosphoprotein</keyword>
<keyword id="KW-1185">Reference proteome</keyword>
<keyword id="KW-0694">RNA-binding</keyword>
<keyword id="KW-0949">S-adenosyl-L-methionine</keyword>
<keyword id="KW-0808">Transferase</keyword>
<keyword id="KW-0819">tRNA processing</keyword>
<keyword id="KW-0820">tRNA-binding</keyword>
<keyword id="KW-0832">Ubl conjugation</keyword>
<keyword id="KW-0862">Zinc</keyword>
<keyword id="KW-0863">Zinc-finger</keyword>
<gene>
    <name evidence="8 10" type="primary">Trmt1l</name>
</gene>
<organism>
    <name type="scientific">Mus musculus</name>
    <name type="common">Mouse</name>
    <dbReference type="NCBI Taxonomy" id="10090"/>
    <lineage>
        <taxon>Eukaryota</taxon>
        <taxon>Metazoa</taxon>
        <taxon>Chordata</taxon>
        <taxon>Craniata</taxon>
        <taxon>Vertebrata</taxon>
        <taxon>Euteleostomi</taxon>
        <taxon>Mammalia</taxon>
        <taxon>Eutheria</taxon>
        <taxon>Euarchontoglires</taxon>
        <taxon>Glires</taxon>
        <taxon>Rodentia</taxon>
        <taxon>Myomorpha</taxon>
        <taxon>Muroidea</taxon>
        <taxon>Muridae</taxon>
        <taxon>Murinae</taxon>
        <taxon>Mus</taxon>
        <taxon>Mus</taxon>
    </lineage>
</organism>
<accession>A2RSY6</accession>
<accession>Q0VGB9</accession>
<accession>Q3UFG1</accession>
<accession>Q3UKB0</accession>
<accession>Q8C2S4</accession>
<accession>Q8CI50</accession>
<accession>Q8R203</accession>
<accession>Q9CT68</accession>
<protein>
    <recommendedName>
        <fullName evidence="9">tRNA (guanine(27)-N(2))-dimethyltransferase</fullName>
        <ecNumber evidence="2">2.1.1.-</ecNumber>
    </recommendedName>
    <alternativeName>
        <fullName evidence="8">tRNA methyltransferase 1-like protein</fullName>
        <shortName evidence="8">TRMT1-like protein</shortName>
    </alternativeName>
</protein>
<evidence type="ECO:0000250" key="1">
    <source>
        <dbReference type="UniProtKB" id="O67010"/>
    </source>
</evidence>
<evidence type="ECO:0000250" key="2">
    <source>
        <dbReference type="UniProtKB" id="Q7Z2T5"/>
    </source>
</evidence>
<evidence type="ECO:0000255" key="3">
    <source>
        <dbReference type="PROSITE-ProRule" id="PRU00958"/>
    </source>
</evidence>
<evidence type="ECO:0000256" key="4">
    <source>
        <dbReference type="SAM" id="MobiDB-lite"/>
    </source>
</evidence>
<evidence type="ECO:0000269" key="5">
    <source>
    </source>
</evidence>
<evidence type="ECO:0000303" key="6">
    <source>
    </source>
</evidence>
<evidence type="ECO:0000303" key="7">
    <source>
    </source>
</evidence>
<evidence type="ECO:0000303" key="8">
    <source>
    </source>
</evidence>
<evidence type="ECO:0000305" key="9"/>
<evidence type="ECO:0000312" key="10">
    <source>
        <dbReference type="MGI" id="MGI:1916185"/>
    </source>
</evidence>
<dbReference type="EC" id="2.1.1.-" evidence="2"/>
<dbReference type="EMBL" id="AK004493">
    <property type="protein sequence ID" value="BAB23331.1"/>
    <property type="molecule type" value="mRNA"/>
</dbReference>
<dbReference type="EMBL" id="AK088077">
    <property type="protein sequence ID" value="BAC40131.1"/>
    <property type="molecule type" value="mRNA"/>
</dbReference>
<dbReference type="EMBL" id="AK146088">
    <property type="protein sequence ID" value="BAE26891.1"/>
    <property type="molecule type" value="mRNA"/>
</dbReference>
<dbReference type="EMBL" id="AK148524">
    <property type="protein sequence ID" value="BAE28600.1"/>
    <property type="molecule type" value="mRNA"/>
</dbReference>
<dbReference type="EMBL" id="BC022682">
    <property type="protein sequence ID" value="AAH22682.1"/>
    <property type="molecule type" value="mRNA"/>
</dbReference>
<dbReference type="EMBL" id="BC037478">
    <property type="protein sequence ID" value="AAH37478.1"/>
    <property type="status" value="ALT_INIT"/>
    <property type="molecule type" value="mRNA"/>
</dbReference>
<dbReference type="EMBL" id="BC110425">
    <property type="protein sequence ID" value="AAI10426.1"/>
    <property type="molecule type" value="mRNA"/>
</dbReference>
<dbReference type="EMBL" id="BC132299">
    <property type="protein sequence ID" value="AAI32300.1"/>
    <property type="molecule type" value="mRNA"/>
</dbReference>
<dbReference type="CCDS" id="CCDS15361.1">
    <molecule id="A2RSY6-1"/>
</dbReference>
<dbReference type="RefSeq" id="NP_081152.2">
    <property type="nucleotide sequence ID" value="NM_026876.3"/>
</dbReference>
<dbReference type="SMR" id="A2RSY6"/>
<dbReference type="BioGRID" id="221107">
    <property type="interactions" value="3"/>
</dbReference>
<dbReference type="FunCoup" id="A2RSY6">
    <property type="interactions" value="2403"/>
</dbReference>
<dbReference type="IntAct" id="A2RSY6">
    <property type="interactions" value="1"/>
</dbReference>
<dbReference type="MINT" id="A2RSY6"/>
<dbReference type="STRING" id="10090.ENSMUSP00000068309"/>
<dbReference type="GlyGen" id="A2RSY6">
    <property type="glycosylation" value="3 sites, 1 O-linked glycan (1 site)"/>
</dbReference>
<dbReference type="iPTMnet" id="A2RSY6"/>
<dbReference type="PhosphoSitePlus" id="A2RSY6"/>
<dbReference type="SwissPalm" id="A2RSY6"/>
<dbReference type="PaxDb" id="10090-ENSMUSP00000068309"/>
<dbReference type="PeptideAtlas" id="A2RSY6"/>
<dbReference type="ProteomicsDB" id="300120">
    <molecule id="A2RSY6-1"/>
</dbReference>
<dbReference type="ProteomicsDB" id="300121">
    <molecule id="A2RSY6-2"/>
</dbReference>
<dbReference type="ProteomicsDB" id="300122">
    <molecule id="A2RSY6-3"/>
</dbReference>
<dbReference type="ProteomicsDB" id="300123">
    <molecule id="A2RSY6-4"/>
</dbReference>
<dbReference type="Pumba" id="A2RSY6"/>
<dbReference type="DNASU" id="98685"/>
<dbReference type="GeneID" id="98685"/>
<dbReference type="KEGG" id="mmu:98685"/>
<dbReference type="UCSC" id="uc007cyr.1">
    <molecule id="A2RSY6-4"/>
    <property type="organism name" value="mouse"/>
</dbReference>
<dbReference type="UCSC" id="uc007cyt.1">
    <molecule id="A2RSY6-3"/>
    <property type="organism name" value="mouse"/>
</dbReference>
<dbReference type="UCSC" id="uc007cyu.1">
    <molecule id="A2RSY6-1"/>
    <property type="organism name" value="mouse"/>
</dbReference>
<dbReference type="UCSC" id="uc029qua.1">
    <molecule id="A2RSY6-2"/>
    <property type="organism name" value="mouse"/>
</dbReference>
<dbReference type="AGR" id="MGI:1916185"/>
<dbReference type="CTD" id="81627"/>
<dbReference type="MGI" id="MGI:1916185">
    <property type="gene designation" value="Trmt1l"/>
</dbReference>
<dbReference type="eggNOG" id="KOG1253">
    <property type="taxonomic scope" value="Eukaryota"/>
</dbReference>
<dbReference type="InParanoid" id="A2RSY6"/>
<dbReference type="OrthoDB" id="6349953at2759"/>
<dbReference type="PhylomeDB" id="A2RSY6"/>
<dbReference type="TreeFam" id="TF300851"/>
<dbReference type="BioGRID-ORCS" id="98685">
    <property type="hits" value="2 hits in 77 CRISPR screens"/>
</dbReference>
<dbReference type="ChiTaRS" id="Trmt1l">
    <property type="organism name" value="mouse"/>
</dbReference>
<dbReference type="PRO" id="PR:A2RSY6"/>
<dbReference type="Proteomes" id="UP000000589">
    <property type="component" value="Unplaced"/>
</dbReference>
<dbReference type="RNAct" id="A2RSY6">
    <property type="molecule type" value="protein"/>
</dbReference>
<dbReference type="GO" id="GO:0005730">
    <property type="term" value="C:nucleolus"/>
    <property type="evidence" value="ECO:0000250"/>
    <property type="project" value="UniProtKB"/>
</dbReference>
<dbReference type="GO" id="GO:0005634">
    <property type="term" value="C:nucleus"/>
    <property type="evidence" value="ECO:0000250"/>
    <property type="project" value="UniProtKB"/>
</dbReference>
<dbReference type="GO" id="GO:0016423">
    <property type="term" value="F:tRNA (guanine) methyltransferase activity"/>
    <property type="evidence" value="ECO:0007669"/>
    <property type="project" value="InterPro"/>
</dbReference>
<dbReference type="GO" id="GO:0000049">
    <property type="term" value="F:tRNA binding"/>
    <property type="evidence" value="ECO:0007669"/>
    <property type="project" value="UniProtKB-KW"/>
</dbReference>
<dbReference type="GO" id="GO:0008270">
    <property type="term" value="F:zinc ion binding"/>
    <property type="evidence" value="ECO:0007669"/>
    <property type="project" value="UniProtKB-KW"/>
</dbReference>
<dbReference type="GO" id="GO:0030534">
    <property type="term" value="P:adult behavior"/>
    <property type="evidence" value="ECO:0000315"/>
    <property type="project" value="MGI"/>
</dbReference>
<dbReference type="GO" id="GO:0008344">
    <property type="term" value="P:adult locomotory behavior"/>
    <property type="evidence" value="ECO:0000315"/>
    <property type="project" value="MGI"/>
</dbReference>
<dbReference type="GO" id="GO:0032259">
    <property type="term" value="P:methylation"/>
    <property type="evidence" value="ECO:0007669"/>
    <property type="project" value="UniProtKB-KW"/>
</dbReference>
<dbReference type="GO" id="GO:0008033">
    <property type="term" value="P:tRNA processing"/>
    <property type="evidence" value="ECO:0007669"/>
    <property type="project" value="UniProtKB-KW"/>
</dbReference>
<dbReference type="CDD" id="cd02440">
    <property type="entry name" value="AdoMet_MTases"/>
    <property type="match status" value="1"/>
</dbReference>
<dbReference type="FunFam" id="3.40.50.150:FF:000098">
    <property type="entry name" value="Trmt1-like isoform 1"/>
    <property type="match status" value="1"/>
</dbReference>
<dbReference type="FunFam" id="3.30.56.70:FF:000001">
    <property type="entry name" value="tRNA (guanine(26)-N(2))-dimethyltransferase"/>
    <property type="match status" value="1"/>
</dbReference>
<dbReference type="Gene3D" id="3.30.56.70">
    <property type="entry name" value="N2,N2-dimethylguanosine tRNA methyltransferase, C-terminal domain"/>
    <property type="match status" value="1"/>
</dbReference>
<dbReference type="Gene3D" id="3.40.50.150">
    <property type="entry name" value="Vaccinia Virus protein VP39"/>
    <property type="match status" value="1"/>
</dbReference>
<dbReference type="InterPro" id="IPR029063">
    <property type="entry name" value="SAM-dependent_MTases_sf"/>
</dbReference>
<dbReference type="InterPro" id="IPR002905">
    <property type="entry name" value="Trm1"/>
</dbReference>
<dbReference type="InterPro" id="IPR042296">
    <property type="entry name" value="tRNA_met_Trm1_C"/>
</dbReference>
<dbReference type="InterPro" id="IPR013087">
    <property type="entry name" value="Znf_C2H2_type"/>
</dbReference>
<dbReference type="PANTHER" id="PTHR10631">
    <property type="entry name" value="N 2 ,N 2 -DIMETHYLGUANOSINE TRNA METHYLTRANSFERASE"/>
    <property type="match status" value="1"/>
</dbReference>
<dbReference type="PANTHER" id="PTHR10631:SF1">
    <property type="entry name" value="TRMT1-LIKE PROTEIN"/>
    <property type="match status" value="1"/>
</dbReference>
<dbReference type="Pfam" id="PF02005">
    <property type="entry name" value="TRM"/>
    <property type="match status" value="2"/>
</dbReference>
<dbReference type="SMART" id="SM00355">
    <property type="entry name" value="ZnF_C2H2"/>
    <property type="match status" value="2"/>
</dbReference>
<dbReference type="SUPFAM" id="SSF53335">
    <property type="entry name" value="S-adenosyl-L-methionine-dependent methyltransferases"/>
    <property type="match status" value="1"/>
</dbReference>
<dbReference type="PROSITE" id="PS51626">
    <property type="entry name" value="SAM_MT_TRM1"/>
    <property type="match status" value="1"/>
</dbReference>
<dbReference type="PROSITE" id="PS00028">
    <property type="entry name" value="ZINC_FINGER_C2H2_1"/>
    <property type="match status" value="1"/>
</dbReference>
<feature type="chain" id="PRO_0000317570" description="tRNA (guanine(27)-N(2))-dimethyltransferase">
    <location>
        <begin position="1"/>
        <end position="728"/>
    </location>
</feature>
<feature type="domain" description="Trm1 methyltransferase" evidence="3">
    <location>
        <begin position="224"/>
        <end position="683"/>
    </location>
</feature>
<feature type="zinc finger region" description="C2H2-type">
    <location>
        <begin position="181"/>
        <end position="203"/>
    </location>
</feature>
<feature type="region of interest" description="Disordered" evidence="4">
    <location>
        <begin position="1"/>
        <end position="78"/>
    </location>
</feature>
<feature type="region of interest" description="Disordered" evidence="4">
    <location>
        <begin position="98"/>
        <end position="118"/>
    </location>
</feature>
<feature type="region of interest" description="Disordered" evidence="4">
    <location>
        <begin position="693"/>
        <end position="728"/>
    </location>
</feature>
<feature type="short sequence motif" description="Nucleolar localization signal" evidence="2">
    <location>
        <begin position="132"/>
        <end position="136"/>
    </location>
</feature>
<feature type="compositionally biased region" description="Acidic residues" evidence="4">
    <location>
        <begin position="1"/>
        <end position="10"/>
    </location>
</feature>
<feature type="compositionally biased region" description="Pro residues" evidence="4">
    <location>
        <begin position="23"/>
        <end position="33"/>
    </location>
</feature>
<feature type="compositionally biased region" description="Low complexity" evidence="4">
    <location>
        <begin position="34"/>
        <end position="46"/>
    </location>
</feature>
<feature type="compositionally biased region" description="Pro residues" evidence="4">
    <location>
        <begin position="47"/>
        <end position="61"/>
    </location>
</feature>
<feature type="compositionally biased region" description="Polar residues" evidence="4">
    <location>
        <begin position="101"/>
        <end position="118"/>
    </location>
</feature>
<feature type="compositionally biased region" description="Basic and acidic residues" evidence="4">
    <location>
        <begin position="708"/>
        <end position="721"/>
    </location>
</feature>
<feature type="binding site" evidence="1">
    <location>
        <position position="257"/>
    </location>
    <ligand>
        <name>S-adenosyl-L-methionine</name>
        <dbReference type="ChEBI" id="CHEBI:59789"/>
    </ligand>
</feature>
<feature type="binding site" evidence="1">
    <location>
        <position position="304"/>
    </location>
    <ligand>
        <name>S-adenosyl-L-methionine</name>
        <dbReference type="ChEBI" id="CHEBI:59789"/>
    </ligand>
</feature>
<feature type="binding site" evidence="1">
    <location>
        <position position="352"/>
    </location>
    <ligand>
        <name>S-adenosyl-L-methionine</name>
        <dbReference type="ChEBI" id="CHEBI:59789"/>
    </ligand>
</feature>
<feature type="binding site" evidence="1">
    <location>
        <position position="353"/>
    </location>
    <ligand>
        <name>S-adenosyl-L-methionine</name>
        <dbReference type="ChEBI" id="CHEBI:59789"/>
    </ligand>
</feature>
<feature type="binding site" evidence="1">
    <location>
        <position position="483"/>
    </location>
    <ligand>
        <name>Zn(2+)</name>
        <dbReference type="ChEBI" id="CHEBI:29105"/>
    </ligand>
</feature>
<feature type="binding site" evidence="1">
    <location>
        <position position="486"/>
    </location>
    <ligand>
        <name>Zn(2+)</name>
        <dbReference type="ChEBI" id="CHEBI:29105"/>
    </ligand>
</feature>
<feature type="binding site" evidence="1">
    <location>
        <position position="508"/>
    </location>
    <ligand>
        <name>Zn(2+)</name>
        <dbReference type="ChEBI" id="CHEBI:29105"/>
    </ligand>
</feature>
<feature type="binding site" evidence="1">
    <location>
        <position position="510"/>
    </location>
    <ligand>
        <name>Zn(2+)</name>
        <dbReference type="ChEBI" id="CHEBI:29105"/>
    </ligand>
</feature>
<feature type="modified residue" description="Phosphothreonine" evidence="2">
    <location>
        <position position="23"/>
    </location>
</feature>
<feature type="modified residue" description="Phosphoserine" evidence="2">
    <location>
        <position position="63"/>
    </location>
</feature>
<feature type="modified residue" description="Phosphoserine" evidence="2">
    <location>
        <position position="607"/>
    </location>
</feature>
<feature type="cross-link" description="Glycyl lysine isopeptide (Lys-Gly) (interchain with G-Cter in SUMO2)" evidence="2">
    <location>
        <position position="580"/>
    </location>
</feature>
<feature type="splice variant" id="VSP_031044" description="In isoform 4." evidence="7">
    <location>
        <begin position="152"/>
        <end position="728"/>
    </location>
</feature>
<feature type="splice variant" id="VSP_031045" description="In isoform 3." evidence="7">
    <original>I</original>
    <variation>K</variation>
    <location>
        <position position="285"/>
    </location>
</feature>
<feature type="splice variant" id="VSP_031046" description="In isoform 3." evidence="7">
    <location>
        <begin position="286"/>
        <end position="728"/>
    </location>
</feature>
<feature type="splice variant" id="VSP_031047" description="In isoform 2." evidence="6">
    <original>KLKKFLCCLSQAGFRVSRTHFDPMGIRTDAPLMQFKSILLKYSTPTYTGAQSEGQMPPAAEDTVTDRVEMSVSDKAEASGCRRW</original>
    <variation>NFLSLLQVKKIFVLSFASRLSSKPNSL</variation>
    <location>
        <begin position="645"/>
        <end position="728"/>
    </location>
</feature>
<feature type="sequence conflict" description="In Ref. 1; BAE26891/BAE28600 and 2; AAI10426." evidence="9" ref="1 2">
    <original>P</original>
    <variation>R</variation>
    <location>
        <position position="24"/>
    </location>
</feature>
<feature type="sequence conflict" description="In Ref. 1; BAC40131." evidence="9" ref="1">
    <original>H</original>
    <variation>D</variation>
    <location>
        <position position="132"/>
    </location>
</feature>
<feature type="sequence conflict" description="In Ref. 1; BAC40131." evidence="9" ref="1">
    <original>K</original>
    <variation>Q</variation>
    <location>
        <position position="133"/>
    </location>
</feature>
<feature type="sequence conflict" description="In Ref. 1; BAB23331." evidence="9" ref="1">
    <original>R</original>
    <variation>I</variation>
    <location>
        <position position="436"/>
    </location>
</feature>
<feature type="sequence conflict" description="In Ref. 1; BAE26891." evidence="9" ref="1">
    <original>L</original>
    <variation>V</variation>
    <location>
        <position position="614"/>
    </location>
</feature>